<name>DARP_SERP5</name>
<gene>
    <name evidence="1" type="primary">darP</name>
    <name type="ordered locus">Spro_4387</name>
</gene>
<proteinExistence type="inferred from homology"/>
<sequence>MNKQPEDWLDDVPENIDEEDDEIIWVSKSEIKRDAEALKDLGVELVELGKNALERIPLDEDLRAAIDLAQKIKKEGRRRQLQLIGKMLRARDVEPIQTALDKLKNRHNQQVSLFHKLEALRDRLVEEGDDAIPPILALYPEADRQQLRSLVRNAQKEKAANKPPKAYRQIFQYLRDLAETAE</sequence>
<evidence type="ECO:0000255" key="1">
    <source>
        <dbReference type="HAMAP-Rule" id="MF_00765"/>
    </source>
</evidence>
<keyword id="KW-0963">Cytoplasm</keyword>
<keyword id="KW-0690">Ribosome biogenesis</keyword>
<keyword id="KW-0694">RNA-binding</keyword>
<keyword id="KW-0699">rRNA-binding</keyword>
<protein>
    <recommendedName>
        <fullName evidence="1">Dual-action ribosomal maturation protein DarP</fullName>
    </recommendedName>
    <alternativeName>
        <fullName evidence="1">Large ribosomal subunit assembly factor DarP</fullName>
    </alternativeName>
</protein>
<comment type="function">
    <text evidence="1">Member of a network of 50S ribosomal subunit biogenesis factors which assembles along the 30S-50S interface, preventing incorrect 23S rRNA structures from forming. Promotes peptidyl transferase center (PTC) maturation.</text>
</comment>
<comment type="subcellular location">
    <subcellularLocation>
        <location evidence="1">Cytoplasm</location>
    </subcellularLocation>
    <text evidence="1">Associates with late stage pre-50S ribosomal subunits.</text>
</comment>
<comment type="similarity">
    <text evidence="1">Belongs to the DarP family.</text>
</comment>
<accession>A8GK41</accession>
<reference key="1">
    <citation type="submission" date="2007-09" db="EMBL/GenBank/DDBJ databases">
        <title>Complete sequence of chromosome of Serratia proteamaculans 568.</title>
        <authorList>
            <consortium name="US DOE Joint Genome Institute"/>
            <person name="Copeland A."/>
            <person name="Lucas S."/>
            <person name="Lapidus A."/>
            <person name="Barry K."/>
            <person name="Glavina del Rio T."/>
            <person name="Dalin E."/>
            <person name="Tice H."/>
            <person name="Pitluck S."/>
            <person name="Chain P."/>
            <person name="Malfatti S."/>
            <person name="Shin M."/>
            <person name="Vergez L."/>
            <person name="Schmutz J."/>
            <person name="Larimer F."/>
            <person name="Land M."/>
            <person name="Hauser L."/>
            <person name="Kyrpides N."/>
            <person name="Kim E."/>
            <person name="Taghavi S."/>
            <person name="Newman L."/>
            <person name="Vangronsveld J."/>
            <person name="van der Lelie D."/>
            <person name="Richardson P."/>
        </authorList>
    </citation>
    <scope>NUCLEOTIDE SEQUENCE [LARGE SCALE GENOMIC DNA]</scope>
    <source>
        <strain>568</strain>
    </source>
</reference>
<organism>
    <name type="scientific">Serratia proteamaculans (strain 568)</name>
    <dbReference type="NCBI Taxonomy" id="399741"/>
    <lineage>
        <taxon>Bacteria</taxon>
        <taxon>Pseudomonadati</taxon>
        <taxon>Pseudomonadota</taxon>
        <taxon>Gammaproteobacteria</taxon>
        <taxon>Enterobacterales</taxon>
        <taxon>Yersiniaceae</taxon>
        <taxon>Serratia</taxon>
    </lineage>
</organism>
<dbReference type="EMBL" id="CP000826">
    <property type="protein sequence ID" value="ABV43481.1"/>
    <property type="molecule type" value="Genomic_DNA"/>
</dbReference>
<dbReference type="SMR" id="A8GK41"/>
<dbReference type="STRING" id="399741.Spro_4387"/>
<dbReference type="KEGG" id="spe:Spro_4387"/>
<dbReference type="eggNOG" id="COG3028">
    <property type="taxonomic scope" value="Bacteria"/>
</dbReference>
<dbReference type="HOGENOM" id="CLU_106757_2_0_6"/>
<dbReference type="OrthoDB" id="5293604at2"/>
<dbReference type="GO" id="GO:0005829">
    <property type="term" value="C:cytosol"/>
    <property type="evidence" value="ECO:0007669"/>
    <property type="project" value="TreeGrafter"/>
</dbReference>
<dbReference type="GO" id="GO:0043022">
    <property type="term" value="F:ribosome binding"/>
    <property type="evidence" value="ECO:0007669"/>
    <property type="project" value="UniProtKB-UniRule"/>
</dbReference>
<dbReference type="GO" id="GO:0019843">
    <property type="term" value="F:rRNA binding"/>
    <property type="evidence" value="ECO:0007669"/>
    <property type="project" value="UniProtKB-UniRule"/>
</dbReference>
<dbReference type="GO" id="GO:1902626">
    <property type="term" value="P:assembly of large subunit precursor of preribosome"/>
    <property type="evidence" value="ECO:0007669"/>
    <property type="project" value="UniProtKB-UniRule"/>
</dbReference>
<dbReference type="CDD" id="cd16331">
    <property type="entry name" value="YjgA-like"/>
    <property type="match status" value="1"/>
</dbReference>
<dbReference type="FunFam" id="1.10.60.30:FF:000001">
    <property type="entry name" value="UPF0307 protein YjgA"/>
    <property type="match status" value="1"/>
</dbReference>
<dbReference type="FunFam" id="1.10.60.30:FF:000002">
    <property type="entry name" value="UPF0307 protein YjgA"/>
    <property type="match status" value="1"/>
</dbReference>
<dbReference type="Gene3D" id="1.10.60.30">
    <property type="entry name" value="PSPTO4464-like domains"/>
    <property type="match status" value="2"/>
</dbReference>
<dbReference type="HAMAP" id="MF_00765">
    <property type="entry name" value="DarP"/>
    <property type="match status" value="1"/>
</dbReference>
<dbReference type="InterPro" id="IPR006839">
    <property type="entry name" value="DarP"/>
</dbReference>
<dbReference type="InterPro" id="IPR023153">
    <property type="entry name" value="DarP_sf"/>
</dbReference>
<dbReference type="NCBIfam" id="NF003593">
    <property type="entry name" value="PRK05255.1-1"/>
    <property type="match status" value="1"/>
</dbReference>
<dbReference type="PANTHER" id="PTHR38101">
    <property type="entry name" value="UPF0307 PROTEIN YJGA"/>
    <property type="match status" value="1"/>
</dbReference>
<dbReference type="PANTHER" id="PTHR38101:SF1">
    <property type="entry name" value="UPF0307 PROTEIN YJGA"/>
    <property type="match status" value="1"/>
</dbReference>
<dbReference type="Pfam" id="PF04751">
    <property type="entry name" value="DarP"/>
    <property type="match status" value="1"/>
</dbReference>
<dbReference type="PIRSF" id="PIRSF016183">
    <property type="entry name" value="UCP016183"/>
    <property type="match status" value="1"/>
</dbReference>
<dbReference type="SUPFAM" id="SSF158710">
    <property type="entry name" value="PSPTO4464-like"/>
    <property type="match status" value="1"/>
</dbReference>
<feature type="chain" id="PRO_1000062225" description="Dual-action ribosomal maturation protein DarP">
    <location>
        <begin position="1"/>
        <end position="182"/>
    </location>
</feature>